<evidence type="ECO:0000250" key="1">
    <source>
        <dbReference type="UniProtKB" id="E9F8L9"/>
    </source>
</evidence>
<evidence type="ECO:0000250" key="2">
    <source>
        <dbReference type="UniProtKB" id="E9F8M1"/>
    </source>
</evidence>
<evidence type="ECO:0000250" key="3">
    <source>
        <dbReference type="UniProtKB" id="E9F8M2"/>
    </source>
</evidence>
<evidence type="ECO:0000250" key="4">
    <source>
        <dbReference type="UniProtKB" id="E9F8M3"/>
    </source>
</evidence>
<evidence type="ECO:0000250" key="5">
    <source>
        <dbReference type="UniProtKB" id="E9F8M4"/>
    </source>
</evidence>
<evidence type="ECO:0000269" key="6">
    <source>
    </source>
</evidence>
<evidence type="ECO:0000303" key="7">
    <source>
    </source>
</evidence>
<evidence type="ECO:0000305" key="8"/>
<evidence type="ECO:0000305" key="9">
    <source>
    </source>
</evidence>
<gene>
    <name evidence="7" type="primary">swnR</name>
    <name type="ORF">ARB_05701</name>
</gene>
<feature type="chain" id="PRO_0000441187" description="Oxidoreductase swnR">
    <location>
        <begin position="1"/>
        <end position="305"/>
    </location>
</feature>
<reference key="1">
    <citation type="journal article" date="2011" name="Genome Biol.">
        <title>Comparative and functional genomics provide insights into the pathogenicity of dermatophytic fungi.</title>
        <authorList>
            <person name="Burmester A."/>
            <person name="Shelest E."/>
            <person name="Gloeckner G."/>
            <person name="Heddergott C."/>
            <person name="Schindler S."/>
            <person name="Staib P."/>
            <person name="Heidel A."/>
            <person name="Felder M."/>
            <person name="Petzold A."/>
            <person name="Szafranski K."/>
            <person name="Feuermann M."/>
            <person name="Pedruzzi I."/>
            <person name="Priebe S."/>
            <person name="Groth M."/>
            <person name="Winkler R."/>
            <person name="Li W."/>
            <person name="Kniemeyer O."/>
            <person name="Schroeckh V."/>
            <person name="Hertweck C."/>
            <person name="Hube B."/>
            <person name="White T.C."/>
            <person name="Platzer M."/>
            <person name="Guthke R."/>
            <person name="Heitman J."/>
            <person name="Woestemeyer J."/>
            <person name="Zipfel P.F."/>
            <person name="Monod M."/>
            <person name="Brakhage A.A."/>
        </authorList>
    </citation>
    <scope>NUCLEOTIDE SEQUENCE [LARGE SCALE GENOMIC DNA]</scope>
    <source>
        <strain>ATCC MYA-4681 / CBS 112371</strain>
    </source>
</reference>
<reference key="2">
    <citation type="journal article" date="2017" name="G3 (Bethesda)">
        <title>Swainsonine biosynthesis genes in diverse symbiotic and pathogenic fungi.</title>
        <authorList>
            <person name="Cook D."/>
            <person name="Donzelli B.G."/>
            <person name="Creamer R."/>
            <person name="Baucom D.L."/>
            <person name="Gardner D.R."/>
            <person name="Pan J."/>
            <person name="Moore N."/>
            <person name="Jaromczyk J.W."/>
            <person name="Schardl C.L."/>
        </authorList>
    </citation>
    <scope>IDENTIFICATION</scope>
    <scope>PATHWAY</scope>
</reference>
<name>SWNR_ARTBC</name>
<organism>
    <name type="scientific">Arthroderma benhamiae (strain ATCC MYA-4681 / CBS 112371)</name>
    <name type="common">Trichophyton mentagrophytes</name>
    <dbReference type="NCBI Taxonomy" id="663331"/>
    <lineage>
        <taxon>Eukaryota</taxon>
        <taxon>Fungi</taxon>
        <taxon>Dikarya</taxon>
        <taxon>Ascomycota</taxon>
        <taxon>Pezizomycotina</taxon>
        <taxon>Eurotiomycetes</taxon>
        <taxon>Eurotiomycetidae</taxon>
        <taxon>Onygenales</taxon>
        <taxon>Arthrodermataceae</taxon>
        <taxon>Trichophyton</taxon>
    </lineage>
</organism>
<proteinExistence type="inferred from homology"/>
<dbReference type="EC" id="1.5.3.7" evidence="3"/>
<dbReference type="EMBL" id="ABSU01000003">
    <property type="protein sequence ID" value="EFE35657.1"/>
    <property type="molecule type" value="Genomic_DNA"/>
</dbReference>
<dbReference type="RefSeq" id="XP_003016302.1">
    <property type="nucleotide sequence ID" value="XM_003016256.1"/>
</dbReference>
<dbReference type="SMR" id="D4AN96"/>
<dbReference type="GeneID" id="9524374"/>
<dbReference type="KEGG" id="abe:ARB_05701"/>
<dbReference type="eggNOG" id="ENOG502SJZF">
    <property type="taxonomic scope" value="Eukaryota"/>
</dbReference>
<dbReference type="HOGENOM" id="CLU_044876_5_0_1"/>
<dbReference type="OMA" id="KVAIAGY"/>
<dbReference type="OrthoDB" id="419598at2759"/>
<dbReference type="Proteomes" id="UP000008866">
    <property type="component" value="Unassembled WGS sequence"/>
</dbReference>
<dbReference type="GO" id="GO:0050031">
    <property type="term" value="F:L-pipecolate oxidase activity"/>
    <property type="evidence" value="ECO:0007669"/>
    <property type="project" value="UniProtKB-EC"/>
</dbReference>
<dbReference type="Gene3D" id="3.40.50.720">
    <property type="entry name" value="NAD(P)-binding Rossmann-like Domain"/>
    <property type="match status" value="1"/>
</dbReference>
<dbReference type="Gene3D" id="3.90.25.10">
    <property type="entry name" value="UDP-galactose 4-epimerase, domain 1"/>
    <property type="match status" value="1"/>
</dbReference>
<dbReference type="InterPro" id="IPR016040">
    <property type="entry name" value="NAD(P)-bd_dom"/>
</dbReference>
<dbReference type="InterPro" id="IPR036291">
    <property type="entry name" value="NAD(P)-bd_dom_sf"/>
</dbReference>
<dbReference type="InterPro" id="IPR051609">
    <property type="entry name" value="NmrA/Isoflavone_reductase-like"/>
</dbReference>
<dbReference type="PANTHER" id="PTHR47706:SF4">
    <property type="entry name" value="NMRA-LIKE DOMAIN-CONTAINING PROTEIN"/>
    <property type="match status" value="1"/>
</dbReference>
<dbReference type="PANTHER" id="PTHR47706">
    <property type="entry name" value="NMRA-LIKE FAMILY PROTEIN"/>
    <property type="match status" value="1"/>
</dbReference>
<dbReference type="Pfam" id="PF13460">
    <property type="entry name" value="NAD_binding_10"/>
    <property type="match status" value="1"/>
</dbReference>
<dbReference type="SUPFAM" id="SSF51735">
    <property type="entry name" value="NAD(P)-binding Rossmann-fold domains"/>
    <property type="match status" value="1"/>
</dbReference>
<accession>D4AN96</accession>
<keyword id="KW-0521">NADP</keyword>
<keyword id="KW-0560">Oxidoreductase</keyword>
<keyword id="KW-1185">Reference proteome</keyword>
<comment type="function">
    <text evidence="1 2 3 4 5 6">Oxidoreductase; part of the gene cluster that mediates the biosynthesis of swainsonine (SW), a cytotoxic fungal alkaloid and a potential cancer therapy drug (PubMed:28381497). Swainsonine production occurs via a multibranched pathway and is dispensable for fungal colonization of plants and infection of insect hosts (By similarity). The first step of swainsonine biosynthesis is the production of the precursor pipecolic acid (PA) via conversion of L-lysine (Lys) to 1-piperideine-6-carboxylate (P6C) by the aminotransferase swnA, the latter being further reduced to PA by the reductase swnR (By similarity). The PKS-NRPS hybrid synthetase swnK uptakes and condensates PA and malonyl-CoA with and without skipping of the ketoreductase (KR) domain in order to produce 3 intermediates, 1-oxoindolizidine, (1S)-1-hydroxyindolizin, and (1R)-1-hydroxyindolizine; with the transisomer (1S)-1-hydroxyindolizin being predominant (By similarity). The terminal thioester reductase (TE) domain of swnK is involved in reduction of the thioester bond to release the intermediate aldehydes (By similarity). The oxidoreductase swnN could contribute to the reduction of 1-oxoindolizidine to (1S)-1-hydroxyindolizin and (1R)-1-hydroxyindolizine, contributing to the major route of SW production (By similarity). The dioxygenase swnH2 would be responsible for the oxidization of (1R)-1-hydroxyindolizine into (1R,2S)-1,2-dihydroxyindolizine and of (1S)-1-hydroxyindolizin to yield both (1R,2S)-1,2-dihydroxyindolizine and (1S,2S)-1,2-dihydroxyindolizine (By similarity). The dioxygenase swnH1 then performs the conversion of the 1,2-dihydroxyindolizine epimers to SW (By similarity).</text>
</comment>
<comment type="catalytic activity">
    <reaction evidence="3">
        <text>L-pipecolate + O2 = L-1-piperideine-6-carboxylate + H2O2 + H(+)</text>
        <dbReference type="Rhea" id="RHEA:11992"/>
        <dbReference type="ChEBI" id="CHEBI:15378"/>
        <dbReference type="ChEBI" id="CHEBI:15379"/>
        <dbReference type="ChEBI" id="CHEBI:16240"/>
        <dbReference type="ChEBI" id="CHEBI:58769"/>
        <dbReference type="ChEBI" id="CHEBI:61185"/>
        <dbReference type="EC" id="1.5.3.7"/>
    </reaction>
    <physiologicalReaction direction="right-to-left" evidence="3">
        <dbReference type="Rhea" id="RHEA:11994"/>
    </physiologicalReaction>
</comment>
<comment type="pathway">
    <text evidence="9">Mycotoxin biosynthesis.</text>
</comment>
<comment type="similarity">
    <text evidence="8">Belongs to the NmrA-type oxidoreductase family. Isoflavone reductase subfamily.</text>
</comment>
<protein>
    <recommendedName>
        <fullName evidence="7">Oxidoreductase swnR</fullName>
        <ecNumber evidence="3">1.5.3.7</ecNumber>
    </recommendedName>
    <alternativeName>
        <fullName evidence="7">Swainsonine biosynthesis gene cluster protein R</fullName>
    </alternativeName>
</protein>
<sequence length="305" mass="34471">MKVAIAGYGDLTRYICEEFVQAGHELVILTRSFKPQIESPGISQAITDYTISSLKATLADCEVLISTIGDMSNAYTSVHHTLIQACQESPKCKRFIPAEFAVNIETYPDEPGFYYAIHEPVRETLRNQTNLEWTLVCIGWLADYFVPSKNRYIKDIDECHPINWKANKAVIPGTGNEPVDFTWARDVAKGLASLIQAPTGSWEPYTFMSGERSCWNDMAALIKEKYRPDMPIEHVSLHATANMIKAAKDEDTLILADYYLLSISQACAIPQDKAKAHKEKFFPHIHFRTLREGLSQFDEKPNSIM</sequence>